<evidence type="ECO:0000255" key="1">
    <source>
        <dbReference type="HAMAP-Rule" id="MF_00081"/>
    </source>
</evidence>
<gene>
    <name evidence="1" type="primary">hrcA</name>
</gene>
<feature type="chain" id="PRO_0000182491" description="Heat-inducible transcription repressor HrcA">
    <location>
        <begin position="1"/>
        <end position="346"/>
    </location>
</feature>
<comment type="function">
    <text evidence="1">Negative regulator of class I heat shock genes (grpE-dnaK-dnaJ and groELS operons). Prevents heat-shock induction of these operons.</text>
</comment>
<comment type="similarity">
    <text evidence="1">Belongs to the HrcA family.</text>
</comment>
<dbReference type="EMBL" id="AJ315380">
    <property type="protein sequence ID" value="CAC86403.1"/>
    <property type="molecule type" value="Genomic_DNA"/>
</dbReference>
<dbReference type="RefSeq" id="WP_056957854.1">
    <property type="nucleotide sequence ID" value="NZ_QRFO01000001.1"/>
</dbReference>
<dbReference type="SMR" id="Q8KML8"/>
<dbReference type="GO" id="GO:0003677">
    <property type="term" value="F:DNA binding"/>
    <property type="evidence" value="ECO:0007669"/>
    <property type="project" value="InterPro"/>
</dbReference>
<dbReference type="GO" id="GO:0045892">
    <property type="term" value="P:negative regulation of DNA-templated transcription"/>
    <property type="evidence" value="ECO:0007669"/>
    <property type="project" value="UniProtKB-UniRule"/>
</dbReference>
<dbReference type="Gene3D" id="3.30.450.40">
    <property type="match status" value="1"/>
</dbReference>
<dbReference type="Gene3D" id="3.30.390.60">
    <property type="entry name" value="Heat-inducible transcription repressor hrca homolog, domain 3"/>
    <property type="match status" value="1"/>
</dbReference>
<dbReference type="Gene3D" id="1.10.10.10">
    <property type="entry name" value="Winged helix-like DNA-binding domain superfamily/Winged helix DNA-binding domain"/>
    <property type="match status" value="1"/>
</dbReference>
<dbReference type="HAMAP" id="MF_00081">
    <property type="entry name" value="HrcA"/>
    <property type="match status" value="1"/>
</dbReference>
<dbReference type="InterPro" id="IPR029016">
    <property type="entry name" value="GAF-like_dom_sf"/>
</dbReference>
<dbReference type="InterPro" id="IPR002571">
    <property type="entry name" value="HrcA"/>
</dbReference>
<dbReference type="InterPro" id="IPR021153">
    <property type="entry name" value="HrcA_C"/>
</dbReference>
<dbReference type="InterPro" id="IPR036388">
    <property type="entry name" value="WH-like_DNA-bd_sf"/>
</dbReference>
<dbReference type="InterPro" id="IPR036390">
    <property type="entry name" value="WH_DNA-bd_sf"/>
</dbReference>
<dbReference type="InterPro" id="IPR005104">
    <property type="entry name" value="WHTH_HrcA_DNA-bd"/>
</dbReference>
<dbReference type="InterPro" id="IPR023120">
    <property type="entry name" value="WHTH_transcript_rep_HrcA_IDD"/>
</dbReference>
<dbReference type="NCBIfam" id="TIGR00331">
    <property type="entry name" value="hrcA"/>
    <property type="match status" value="1"/>
</dbReference>
<dbReference type="PANTHER" id="PTHR34824">
    <property type="entry name" value="HEAT-INDUCIBLE TRANSCRIPTION REPRESSOR HRCA"/>
    <property type="match status" value="1"/>
</dbReference>
<dbReference type="PANTHER" id="PTHR34824:SF1">
    <property type="entry name" value="HEAT-INDUCIBLE TRANSCRIPTION REPRESSOR HRCA"/>
    <property type="match status" value="1"/>
</dbReference>
<dbReference type="Pfam" id="PF01628">
    <property type="entry name" value="HrcA"/>
    <property type="match status" value="1"/>
</dbReference>
<dbReference type="Pfam" id="PF03444">
    <property type="entry name" value="HrcA_DNA-bdg"/>
    <property type="match status" value="1"/>
</dbReference>
<dbReference type="PIRSF" id="PIRSF005485">
    <property type="entry name" value="HrcA"/>
    <property type="match status" value="1"/>
</dbReference>
<dbReference type="SUPFAM" id="SSF55781">
    <property type="entry name" value="GAF domain-like"/>
    <property type="match status" value="1"/>
</dbReference>
<dbReference type="SUPFAM" id="SSF46785">
    <property type="entry name" value="Winged helix' DNA-binding domain"/>
    <property type="match status" value="1"/>
</dbReference>
<reference key="1">
    <citation type="submission" date="2001-07" db="EMBL/GenBank/DDBJ databases">
        <title>Identification and characterization of the dnak operon of Lactobacillus sanfranciscensis.</title>
        <authorList>
            <person name="Ehrmann M.A."/>
        </authorList>
    </citation>
    <scope>NUCLEOTIDE SEQUENCE [GENOMIC DNA]</scope>
    <source>
        <strain>ATCC 27651 / DSM 20451 / JCM 5668 / KCTC 3205 / NCIMB 702811 / NRRL B-3934 / L-12</strain>
    </source>
</reference>
<name>HRCA_FRUSA</name>
<proteinExistence type="inferred from homology"/>
<keyword id="KW-0678">Repressor</keyword>
<keyword id="KW-0346">Stress response</keyword>
<keyword id="KW-0804">Transcription</keyword>
<keyword id="KW-0805">Transcription regulation</keyword>
<sequence length="346" mass="39345">MLTERQSMILKYIIDDYSKTGVPIGSKALAEQLPIHVSSATIRNEMAVLSHQNFIEKLHTSSGRVPSNQGYRYYIDNLAKPAKLDTKRLEYISEMLDGSFQQIDEIVRQSADILSHLTDYTALTFSPELTTENTIKHLQLVNLGLNRMMVVIVMGNEQVESQSFLVTNQYIDSQLSLATNLLNQQLVGKTAREVKQVFQSKILTELHTYLPDTKQFVRAIQAILSKIDDDHYFISGQMNMFEQNGKQDFSKIKSLYSMFNNDNGIDALLEKSSKPISVKIGAEFDNDWLKDYSIITGSYDLGNHGIGRIALIGPMRMSYPNMLGVVDAFRHELKNRISGYYRSYDQ</sequence>
<protein>
    <recommendedName>
        <fullName evidence="1">Heat-inducible transcription repressor HrcA</fullName>
    </recommendedName>
</protein>
<organism>
    <name type="scientific">Fructilactobacillus sanfranciscensis</name>
    <name type="common">Lactobacillus sanfranciscensis</name>
    <dbReference type="NCBI Taxonomy" id="1625"/>
    <lineage>
        <taxon>Bacteria</taxon>
        <taxon>Bacillati</taxon>
        <taxon>Bacillota</taxon>
        <taxon>Bacilli</taxon>
        <taxon>Lactobacillales</taxon>
        <taxon>Lactobacillaceae</taxon>
        <taxon>Fructilactobacillus</taxon>
    </lineage>
</organism>
<accession>Q8KML8</accession>